<evidence type="ECO:0000255" key="1"/>
<evidence type="ECO:0000256" key="2">
    <source>
        <dbReference type="SAM" id="MobiDB-lite"/>
    </source>
</evidence>
<evidence type="ECO:0000305" key="3"/>
<name>NT5D_DICDI</name>
<proteinExistence type="inferred from homology"/>
<comment type="cofactor">
    <cofactor evidence="3">
        <name>Mg(2+)</name>
        <dbReference type="ChEBI" id="CHEBI:18420"/>
    </cofactor>
    <text evidence="3">Binds 1 Mg(2+) ion per subunit.</text>
</comment>
<comment type="similarity">
    <text evidence="3">Belongs to the 5'(3')-deoxyribonucleotidase family.</text>
</comment>
<organism>
    <name type="scientific">Dictyostelium discoideum</name>
    <name type="common">Social amoeba</name>
    <dbReference type="NCBI Taxonomy" id="44689"/>
    <lineage>
        <taxon>Eukaryota</taxon>
        <taxon>Amoebozoa</taxon>
        <taxon>Evosea</taxon>
        <taxon>Eumycetozoa</taxon>
        <taxon>Dictyostelia</taxon>
        <taxon>Dictyosteliales</taxon>
        <taxon>Dictyosteliaceae</taxon>
        <taxon>Dictyostelium</taxon>
    </lineage>
</organism>
<keyword id="KW-0378">Hydrolase</keyword>
<keyword id="KW-0460">Magnesium</keyword>
<keyword id="KW-0479">Metal-binding</keyword>
<keyword id="KW-1185">Reference proteome</keyword>
<dbReference type="EC" id="3.1.3.-"/>
<dbReference type="EMBL" id="AAFI02000013">
    <property type="protein sequence ID" value="EAL69484.1"/>
    <property type="molecule type" value="Genomic_DNA"/>
</dbReference>
<dbReference type="RefSeq" id="XP_643646.1">
    <property type="nucleotide sequence ID" value="XM_638554.1"/>
</dbReference>
<dbReference type="SMR" id="Q75K12"/>
<dbReference type="FunCoup" id="Q75K12">
    <property type="interactions" value="7"/>
</dbReference>
<dbReference type="PaxDb" id="44689-DDB0230203"/>
<dbReference type="EnsemblProtists" id="EAL69484">
    <property type="protein sequence ID" value="EAL69484"/>
    <property type="gene ID" value="DDB_G0275467"/>
</dbReference>
<dbReference type="GeneID" id="8620233"/>
<dbReference type="KEGG" id="ddi:DDB_G0275467"/>
<dbReference type="dictyBase" id="DDB_G0275467"/>
<dbReference type="VEuPathDB" id="AmoebaDB:DDB_G0275467"/>
<dbReference type="eggNOG" id="KOG2470">
    <property type="taxonomic scope" value="Eukaryota"/>
</dbReference>
<dbReference type="HOGENOM" id="CLU_017845_5_1_1"/>
<dbReference type="InParanoid" id="Q75K12"/>
<dbReference type="OMA" id="LWARGNR"/>
<dbReference type="PhylomeDB" id="Q75K12"/>
<dbReference type="PRO" id="PR:Q75K12"/>
<dbReference type="Proteomes" id="UP000002195">
    <property type="component" value="Chromosome 2"/>
</dbReference>
<dbReference type="GO" id="GO:0008253">
    <property type="term" value="F:5'-nucleotidase activity"/>
    <property type="evidence" value="ECO:0000318"/>
    <property type="project" value="GO_Central"/>
</dbReference>
<dbReference type="GO" id="GO:0046872">
    <property type="term" value="F:metal ion binding"/>
    <property type="evidence" value="ECO:0007669"/>
    <property type="project" value="UniProtKB-KW"/>
</dbReference>
<dbReference type="CDD" id="cd07522">
    <property type="entry name" value="HAD_cN-II"/>
    <property type="match status" value="1"/>
</dbReference>
<dbReference type="FunFam" id="3.40.50.1000:FF:000532">
    <property type="match status" value="1"/>
</dbReference>
<dbReference type="Gene3D" id="3.40.50.1000">
    <property type="entry name" value="HAD superfamily/HAD-like"/>
    <property type="match status" value="1"/>
</dbReference>
<dbReference type="InterPro" id="IPR036412">
    <property type="entry name" value="HAD-like_sf"/>
</dbReference>
<dbReference type="InterPro" id="IPR008380">
    <property type="entry name" value="HAD-SF_hydro_IG_5-nucl"/>
</dbReference>
<dbReference type="InterPro" id="IPR023214">
    <property type="entry name" value="HAD_sf"/>
</dbReference>
<dbReference type="NCBIfam" id="TIGR02244">
    <property type="entry name" value="HAD-IG-Ncltidse"/>
    <property type="match status" value="1"/>
</dbReference>
<dbReference type="PANTHER" id="PTHR12103">
    <property type="entry name" value="5'-NUCLEOTIDASE DOMAIN-CONTAINING"/>
    <property type="match status" value="1"/>
</dbReference>
<dbReference type="PANTHER" id="PTHR12103:SF12">
    <property type="entry name" value="FI20020P1"/>
    <property type="match status" value="1"/>
</dbReference>
<dbReference type="Pfam" id="PF05761">
    <property type="entry name" value="5_nucleotid"/>
    <property type="match status" value="1"/>
</dbReference>
<dbReference type="SUPFAM" id="SSF56784">
    <property type="entry name" value="HAD-like"/>
    <property type="match status" value="1"/>
</dbReference>
<accession>Q75K12</accession>
<accession>Q552N5</accession>
<protein>
    <recommendedName>
        <fullName>5'-nucleotidase domain-containing protein DDB_G0275467</fullName>
        <ecNumber>3.1.3.-</ecNumber>
    </recommendedName>
</protein>
<feature type="chain" id="PRO_0000356850" description="5'-nucleotidase domain-containing protein DDB_G0275467">
    <location>
        <begin position="1"/>
        <end position="591"/>
    </location>
</feature>
<feature type="region of interest" description="Disordered" evidence="2">
    <location>
        <begin position="38"/>
        <end position="88"/>
    </location>
</feature>
<feature type="compositionally biased region" description="Low complexity" evidence="2">
    <location>
        <begin position="38"/>
        <end position="50"/>
    </location>
</feature>
<feature type="compositionally biased region" description="Low complexity" evidence="2">
    <location>
        <begin position="68"/>
        <end position="78"/>
    </location>
</feature>
<feature type="active site" description="Nucleophile" evidence="1">
    <location>
        <position position="165"/>
    </location>
</feature>
<feature type="active site" description="Proton donor" evidence="1">
    <location>
        <position position="167"/>
    </location>
</feature>
<feature type="binding site" evidence="1">
    <location>
        <position position="165"/>
    </location>
    <ligand>
        <name>Mg(2+)</name>
        <dbReference type="ChEBI" id="CHEBI:18420"/>
    </ligand>
</feature>
<feature type="binding site" evidence="1">
    <location>
        <position position="167"/>
    </location>
    <ligand>
        <name>Mg(2+)</name>
        <dbReference type="ChEBI" id="CHEBI:18420"/>
    </ligand>
</feature>
<feature type="binding site" evidence="1">
    <location>
        <begin position="305"/>
        <end position="313"/>
    </location>
    <ligand>
        <name>substrate</name>
    </ligand>
</feature>
<feature type="binding site" evidence="1">
    <location>
        <position position="450"/>
    </location>
    <ligand>
        <name>Mg(2+)</name>
        <dbReference type="ChEBI" id="CHEBI:18420"/>
    </ligand>
</feature>
<sequence length="591" mass="68462">MLSNKRISLIKVLPIPSNKKNVFKINCSSNTTIITTSSTTTTSGIKSYSTHNRSNNDTHTSKSNTIDQHQQQQPQQHQNNDNKHLFTPTPFQSLVKNVNKPFRNDKDPDYLPTHHSVLNMSLDQLIEMYKNRKVVDLSHVPTLDPQDVFINSELKLEEIDVFGFDYDYTLANYGDQVQHLIYDLAMSHLVDEQKYPMALKEIKYDPTFAIRGLHFDVNHGLLMKLDYLNNIQAGAIYHGRRPLTKEEVIQIYGSMQLKRLYCDSFLKPMSDIFCLPEACLIANTIQYLTDHNLAFEPRIIHEDVTAAVGKVHLGGGLHNKIISDFPLYLNKHPLLGEFLLKLKSHGKKLFLLTNNSYFYANHGMKYLLNDQLNGKYEDWTDVFDVIITKCDKPSFFGKGRPFRMYHPDSDRYDWNEVNHFEPKKVYVGGSLKQFTNVSKWRGRSVMYFGDHLYSDLVEPSQKEGWKTGVIIKELEVEVGIQNSPKYREQLAELLQLEDVIRKCQFFSGEKKELFLEQLKTERYKKRLALKEPFNANFGSLFRTHTNATIFASSLQRHADIYTSKIENLISYPLTASLIPSRNYLPHEFKLN</sequence>
<gene>
    <name type="ORF">DDB_G0275467</name>
</gene>
<reference key="1">
    <citation type="journal article" date="2002" name="Nature">
        <title>Sequence and analysis of chromosome 2 of Dictyostelium discoideum.</title>
        <authorList>
            <person name="Gloeckner G."/>
            <person name="Eichinger L."/>
            <person name="Szafranski K."/>
            <person name="Pachebat J.A."/>
            <person name="Bankier A.T."/>
            <person name="Dear P.H."/>
            <person name="Lehmann R."/>
            <person name="Baumgart C."/>
            <person name="Parra G."/>
            <person name="Abril J.F."/>
            <person name="Guigo R."/>
            <person name="Kumpf K."/>
            <person name="Tunggal B."/>
            <person name="Cox E.C."/>
            <person name="Quail M.A."/>
            <person name="Platzer M."/>
            <person name="Rosenthal A."/>
            <person name="Noegel A.A."/>
        </authorList>
    </citation>
    <scope>NUCLEOTIDE SEQUENCE [LARGE SCALE GENOMIC DNA]</scope>
    <source>
        <strain>AX4</strain>
    </source>
</reference>
<reference key="2">
    <citation type="journal article" date="2005" name="Nature">
        <title>The genome of the social amoeba Dictyostelium discoideum.</title>
        <authorList>
            <person name="Eichinger L."/>
            <person name="Pachebat J.A."/>
            <person name="Gloeckner G."/>
            <person name="Rajandream M.A."/>
            <person name="Sucgang R."/>
            <person name="Berriman M."/>
            <person name="Song J."/>
            <person name="Olsen R."/>
            <person name="Szafranski K."/>
            <person name="Xu Q."/>
            <person name="Tunggal B."/>
            <person name="Kummerfeld S."/>
            <person name="Madera M."/>
            <person name="Konfortov B.A."/>
            <person name="Rivero F."/>
            <person name="Bankier A.T."/>
            <person name="Lehmann R."/>
            <person name="Hamlin N."/>
            <person name="Davies R."/>
            <person name="Gaudet P."/>
            <person name="Fey P."/>
            <person name="Pilcher K."/>
            <person name="Chen G."/>
            <person name="Saunders D."/>
            <person name="Sodergren E.J."/>
            <person name="Davis P."/>
            <person name="Kerhornou A."/>
            <person name="Nie X."/>
            <person name="Hall N."/>
            <person name="Anjard C."/>
            <person name="Hemphill L."/>
            <person name="Bason N."/>
            <person name="Farbrother P."/>
            <person name="Desany B."/>
            <person name="Just E."/>
            <person name="Morio T."/>
            <person name="Rost R."/>
            <person name="Churcher C.M."/>
            <person name="Cooper J."/>
            <person name="Haydock S."/>
            <person name="van Driessche N."/>
            <person name="Cronin A."/>
            <person name="Goodhead I."/>
            <person name="Muzny D.M."/>
            <person name="Mourier T."/>
            <person name="Pain A."/>
            <person name="Lu M."/>
            <person name="Harper D."/>
            <person name="Lindsay R."/>
            <person name="Hauser H."/>
            <person name="James K.D."/>
            <person name="Quiles M."/>
            <person name="Madan Babu M."/>
            <person name="Saito T."/>
            <person name="Buchrieser C."/>
            <person name="Wardroper A."/>
            <person name="Felder M."/>
            <person name="Thangavelu M."/>
            <person name="Johnson D."/>
            <person name="Knights A."/>
            <person name="Loulseged H."/>
            <person name="Mungall K.L."/>
            <person name="Oliver K."/>
            <person name="Price C."/>
            <person name="Quail M.A."/>
            <person name="Urushihara H."/>
            <person name="Hernandez J."/>
            <person name="Rabbinowitsch E."/>
            <person name="Steffen D."/>
            <person name="Sanders M."/>
            <person name="Ma J."/>
            <person name="Kohara Y."/>
            <person name="Sharp S."/>
            <person name="Simmonds M.N."/>
            <person name="Spiegler S."/>
            <person name="Tivey A."/>
            <person name="Sugano S."/>
            <person name="White B."/>
            <person name="Walker D."/>
            <person name="Woodward J.R."/>
            <person name="Winckler T."/>
            <person name="Tanaka Y."/>
            <person name="Shaulsky G."/>
            <person name="Schleicher M."/>
            <person name="Weinstock G.M."/>
            <person name="Rosenthal A."/>
            <person name="Cox E.C."/>
            <person name="Chisholm R.L."/>
            <person name="Gibbs R.A."/>
            <person name="Loomis W.F."/>
            <person name="Platzer M."/>
            <person name="Kay R.R."/>
            <person name="Williams J.G."/>
            <person name="Dear P.H."/>
            <person name="Noegel A.A."/>
            <person name="Barrell B.G."/>
            <person name="Kuspa A."/>
        </authorList>
    </citation>
    <scope>NUCLEOTIDE SEQUENCE [LARGE SCALE GENOMIC DNA]</scope>
    <source>
        <strain>AX4</strain>
    </source>
</reference>